<protein>
    <recommendedName>
        <fullName evidence="5">Serine/threonine-protein kinase tricornered</fullName>
        <ecNumber evidence="1">2.7.11.1</ecNumber>
    </recommendedName>
    <alternativeName>
        <fullName>NDR protein kinase</fullName>
    </alternativeName>
    <alternativeName>
        <fullName>Serine/threonine-protein kinase 38-like</fullName>
    </alternativeName>
    <alternativeName>
        <fullName evidence="5">Serine/threonine-protein kinase tricorner</fullName>
    </alternativeName>
</protein>
<feature type="chain" id="PRO_0000279718" description="Serine/threonine-protein kinase tricornered">
    <location>
        <begin position="1"/>
        <end position="458"/>
    </location>
</feature>
<feature type="domain" description="Protein kinase" evidence="2">
    <location>
        <begin position="92"/>
        <end position="389"/>
    </location>
</feature>
<feature type="domain" description="AGC-kinase C-terminal" evidence="3">
    <location>
        <begin position="390"/>
        <end position="458"/>
    </location>
</feature>
<feature type="region of interest" description="Interaction with mats and Mob1" evidence="1">
    <location>
        <begin position="118"/>
        <end position="179"/>
    </location>
</feature>
<feature type="active site" description="Proton acceptor" evidence="2 4">
    <location>
        <position position="215"/>
    </location>
</feature>
<feature type="binding site" evidence="2">
    <location>
        <begin position="98"/>
        <end position="106"/>
    </location>
    <ligand>
        <name>ATP</name>
        <dbReference type="ChEBI" id="CHEBI:30616"/>
    </ligand>
</feature>
<feature type="binding site" evidence="2">
    <location>
        <position position="121"/>
    </location>
    <ligand>
        <name>ATP</name>
        <dbReference type="ChEBI" id="CHEBI:30616"/>
    </ligand>
</feature>
<feature type="modified residue" description="Phosphoserine" evidence="1">
    <location>
        <position position="287"/>
    </location>
</feature>
<feature type="modified residue" description="Phosphothreonine" evidence="1">
    <location>
        <position position="448"/>
    </location>
</feature>
<keyword id="KW-0067">ATP-binding</keyword>
<keyword id="KW-0963">Cytoplasm</keyword>
<keyword id="KW-0418">Kinase</keyword>
<keyword id="KW-0460">Magnesium</keyword>
<keyword id="KW-0479">Metal-binding</keyword>
<keyword id="KW-0547">Nucleotide-binding</keyword>
<keyword id="KW-0539">Nucleus</keyword>
<keyword id="KW-0597">Phosphoprotein</keyword>
<keyword id="KW-1185">Reference proteome</keyword>
<keyword id="KW-0723">Serine/threonine-protein kinase</keyword>
<keyword id="KW-0808">Transferase</keyword>
<evidence type="ECO:0000250" key="1">
    <source>
        <dbReference type="UniProtKB" id="Q9NBK5"/>
    </source>
</evidence>
<evidence type="ECO:0000255" key="2">
    <source>
        <dbReference type="PROSITE-ProRule" id="PRU00159"/>
    </source>
</evidence>
<evidence type="ECO:0000255" key="3">
    <source>
        <dbReference type="PROSITE-ProRule" id="PRU00618"/>
    </source>
</evidence>
<evidence type="ECO:0000255" key="4">
    <source>
        <dbReference type="PROSITE-ProRule" id="PRU10027"/>
    </source>
</evidence>
<evidence type="ECO:0000305" key="5"/>
<organism>
    <name type="scientific">Drosophila pseudoobscura pseudoobscura</name>
    <name type="common">Fruit fly</name>
    <dbReference type="NCBI Taxonomy" id="46245"/>
    <lineage>
        <taxon>Eukaryota</taxon>
        <taxon>Metazoa</taxon>
        <taxon>Ecdysozoa</taxon>
        <taxon>Arthropoda</taxon>
        <taxon>Hexapoda</taxon>
        <taxon>Insecta</taxon>
        <taxon>Pterygota</taxon>
        <taxon>Neoptera</taxon>
        <taxon>Endopterygota</taxon>
        <taxon>Diptera</taxon>
        <taxon>Brachycera</taxon>
        <taxon>Muscomorpha</taxon>
        <taxon>Ephydroidea</taxon>
        <taxon>Drosophilidae</taxon>
        <taxon>Drosophila</taxon>
        <taxon>Sophophora</taxon>
    </lineage>
</organism>
<sequence length="458" mass="52935">MMSSRTDTDGSSIRFSDHTLDKATKAKVTLENYYSNLVTQYGERKQRLAKLEAQLKDESLTESQRQEKRLQHAQKETEYLRLKRLRLGVEDFEALKVIGRGAFGEVRLVQKKDTGHVYAMKVLRKADMLEKEQVAHVRAERDVLVEADHQWVVKMYYSFQDQVNLYLIMEFLPGGDMMTLLMKKDTLSEEGTQFYISETALAIDSIHKLGFIHRDIKPDNLLLDARGHLKLSDFGLCTGLKKSHRTDFYRDLSQAKPSDFIGTCASPMDSKRRAESWKRNRRALAYSTVGTPDYIAPEVFLQTGYGPACDWWSLGVIMYEMLMGYPPFCSDNPQDTYRKVMNWRETLIFPPEIPISEEAKETIIKFCCEADRRLGSQRGLEDLKSVPFFRGVDWEHIRERPAAIPVEVRSIDDTSNFDEFPDVSLEIPSAPIPQGGEIAKDWVFINYTYKRFEVRNLE</sequence>
<proteinExistence type="inferred from homology"/>
<name>TRC_DROPS</name>
<gene>
    <name evidence="1" type="primary">trc</name>
    <name type="ORF">GA21227</name>
</gene>
<reference key="1">
    <citation type="journal article" date="2005" name="Genome Res.">
        <title>Comparative genome sequencing of Drosophila pseudoobscura: chromosomal, gene, and cis-element evolution.</title>
        <authorList>
            <person name="Richards S."/>
            <person name="Liu Y."/>
            <person name="Bettencourt B.R."/>
            <person name="Hradecky P."/>
            <person name="Letovsky S."/>
            <person name="Nielsen R."/>
            <person name="Thornton K."/>
            <person name="Hubisz M.J."/>
            <person name="Chen R."/>
            <person name="Meisel R.P."/>
            <person name="Couronne O."/>
            <person name="Hua S."/>
            <person name="Smith M.A."/>
            <person name="Zhang P."/>
            <person name="Liu J."/>
            <person name="Bussemaker H.J."/>
            <person name="van Batenburg M.F."/>
            <person name="Howells S.L."/>
            <person name="Scherer S.E."/>
            <person name="Sodergren E."/>
            <person name="Matthews B.B."/>
            <person name="Crosby M.A."/>
            <person name="Schroeder A.J."/>
            <person name="Ortiz-Barrientos D."/>
            <person name="Rives C.M."/>
            <person name="Metzker M.L."/>
            <person name="Muzny D.M."/>
            <person name="Scott G."/>
            <person name="Steffen D."/>
            <person name="Wheeler D.A."/>
            <person name="Worley K.C."/>
            <person name="Havlak P."/>
            <person name="Durbin K.J."/>
            <person name="Egan A."/>
            <person name="Gill R."/>
            <person name="Hume J."/>
            <person name="Morgan M.B."/>
            <person name="Miner G."/>
            <person name="Hamilton C."/>
            <person name="Huang Y."/>
            <person name="Waldron L."/>
            <person name="Verduzco D."/>
            <person name="Clerc-Blankenburg K.P."/>
            <person name="Dubchak I."/>
            <person name="Noor M.A.F."/>
            <person name="Anderson W."/>
            <person name="White K.P."/>
            <person name="Clark A.G."/>
            <person name="Schaeffer S.W."/>
            <person name="Gelbart W.M."/>
            <person name="Weinstock G.M."/>
            <person name="Gibbs R.A."/>
        </authorList>
    </citation>
    <scope>NUCLEOTIDE SEQUENCE [LARGE SCALE GENOMIC DNA]</scope>
    <source>
        <strain>MV2-25 / Tucson 14011-0121.94</strain>
    </source>
</reference>
<accession>Q2LZZ7</accession>
<dbReference type="EC" id="2.7.11.1" evidence="1"/>
<dbReference type="EMBL" id="CH379069">
    <property type="protein sequence ID" value="EAL31140.2"/>
    <property type="status" value="ALT_INIT"/>
    <property type="molecule type" value="Genomic_DNA"/>
</dbReference>
<dbReference type="RefSeq" id="XP_001353626.3">
    <property type="nucleotide sequence ID" value="XM_001353590.3"/>
</dbReference>
<dbReference type="SMR" id="Q2LZZ7"/>
<dbReference type="FunCoup" id="Q2LZZ7">
    <property type="interactions" value="1582"/>
</dbReference>
<dbReference type="STRING" id="46245.Q2LZZ7"/>
<dbReference type="EnsemblMetazoa" id="FBtr0275951">
    <property type="protein sequence ID" value="FBpp0274389"/>
    <property type="gene ID" value="FBgn0081215"/>
</dbReference>
<dbReference type="GeneID" id="4813412"/>
<dbReference type="KEGG" id="dpo:4813412"/>
<dbReference type="CTD" id="40165"/>
<dbReference type="eggNOG" id="KOG0605">
    <property type="taxonomic scope" value="Eukaryota"/>
</dbReference>
<dbReference type="InParanoid" id="Q2LZZ7"/>
<dbReference type="PhylomeDB" id="Q2LZZ7"/>
<dbReference type="Proteomes" id="UP000001819">
    <property type="component" value="Chromosome X"/>
</dbReference>
<dbReference type="Bgee" id="FBgn0081215">
    <property type="expression patterns" value="Expressed in insect adult head and 2 other cell types or tissues"/>
</dbReference>
<dbReference type="GO" id="GO:0005737">
    <property type="term" value="C:cytoplasm"/>
    <property type="evidence" value="ECO:0000250"/>
    <property type="project" value="UniProtKB"/>
</dbReference>
<dbReference type="GO" id="GO:0005634">
    <property type="term" value="C:nucleus"/>
    <property type="evidence" value="ECO:0000250"/>
    <property type="project" value="UniProtKB"/>
</dbReference>
<dbReference type="GO" id="GO:0005524">
    <property type="term" value="F:ATP binding"/>
    <property type="evidence" value="ECO:0000250"/>
    <property type="project" value="UniProtKB"/>
</dbReference>
<dbReference type="GO" id="GO:0046872">
    <property type="term" value="F:metal ion binding"/>
    <property type="evidence" value="ECO:0007669"/>
    <property type="project" value="UniProtKB-KW"/>
</dbReference>
<dbReference type="GO" id="GO:0106310">
    <property type="term" value="F:protein serine kinase activity"/>
    <property type="evidence" value="ECO:0007669"/>
    <property type="project" value="RHEA"/>
</dbReference>
<dbReference type="GO" id="GO:0004674">
    <property type="term" value="F:protein serine/threonine kinase activity"/>
    <property type="evidence" value="ECO:0000250"/>
    <property type="project" value="UniProtKB"/>
</dbReference>
<dbReference type="GO" id="GO:0035556">
    <property type="term" value="P:intracellular signal transduction"/>
    <property type="evidence" value="ECO:0000250"/>
    <property type="project" value="UniProtKB"/>
</dbReference>
<dbReference type="GO" id="GO:0051012">
    <property type="term" value="P:microtubule sliding"/>
    <property type="evidence" value="ECO:0000250"/>
    <property type="project" value="UniProtKB"/>
</dbReference>
<dbReference type="GO" id="GO:0150013">
    <property type="term" value="P:negative regulation of neuron projection arborization"/>
    <property type="evidence" value="ECO:0000250"/>
    <property type="project" value="UniProtKB"/>
</dbReference>
<dbReference type="GO" id="GO:0006468">
    <property type="term" value="P:protein phosphorylation"/>
    <property type="evidence" value="ECO:0000250"/>
    <property type="project" value="UniProtKB"/>
</dbReference>
<dbReference type="GO" id="GO:0050773">
    <property type="term" value="P:regulation of dendrite development"/>
    <property type="evidence" value="ECO:0000250"/>
    <property type="project" value="UniProtKB"/>
</dbReference>
<dbReference type="GO" id="GO:0007165">
    <property type="term" value="P:signal transduction"/>
    <property type="evidence" value="ECO:0000250"/>
    <property type="project" value="UniProtKB"/>
</dbReference>
<dbReference type="CDD" id="cd21780">
    <property type="entry name" value="MobB_Trc-like"/>
    <property type="match status" value="1"/>
</dbReference>
<dbReference type="CDD" id="cd05599">
    <property type="entry name" value="STKc_NDR_like"/>
    <property type="match status" value="1"/>
</dbReference>
<dbReference type="FunFam" id="1.10.510.10:FF:000057">
    <property type="entry name" value="Non-specific serine/threonine protein kinase"/>
    <property type="match status" value="1"/>
</dbReference>
<dbReference type="FunFam" id="1.10.510.10:FF:000086">
    <property type="entry name" value="Non-specific serine/threonine protein kinase"/>
    <property type="match status" value="1"/>
</dbReference>
<dbReference type="FunFam" id="3.30.200.20:FF:000393">
    <property type="entry name" value="Non-specific serine/threonine protein kinase"/>
    <property type="match status" value="1"/>
</dbReference>
<dbReference type="FunFam" id="3.30.200.20:FF:000344">
    <property type="entry name" value="Serine/threonine-protein kinase WARTS homolog"/>
    <property type="match status" value="1"/>
</dbReference>
<dbReference type="Gene3D" id="3.30.200.20">
    <property type="entry name" value="Phosphorylase Kinase, domain 1"/>
    <property type="match status" value="1"/>
</dbReference>
<dbReference type="Gene3D" id="1.10.510.10">
    <property type="entry name" value="Transferase(Phosphotransferase) domain 1"/>
    <property type="match status" value="2"/>
</dbReference>
<dbReference type="InterPro" id="IPR000961">
    <property type="entry name" value="AGC-kinase_C"/>
</dbReference>
<dbReference type="InterPro" id="IPR011009">
    <property type="entry name" value="Kinase-like_dom_sf"/>
</dbReference>
<dbReference type="InterPro" id="IPR017892">
    <property type="entry name" value="Pkinase_C"/>
</dbReference>
<dbReference type="InterPro" id="IPR000719">
    <property type="entry name" value="Prot_kinase_dom"/>
</dbReference>
<dbReference type="InterPro" id="IPR017441">
    <property type="entry name" value="Protein_kinase_ATP_BS"/>
</dbReference>
<dbReference type="InterPro" id="IPR050839">
    <property type="entry name" value="Rho-assoc_Ser/Thr_Kinase"/>
</dbReference>
<dbReference type="InterPro" id="IPR008271">
    <property type="entry name" value="Ser/Thr_kinase_AS"/>
</dbReference>
<dbReference type="PANTHER" id="PTHR22988:SF76">
    <property type="entry name" value="CHROMOSOME UNDETERMINED SCAFFOLD_135, WHOLE GENOME SHOTGUN SEQUENCE"/>
    <property type="match status" value="1"/>
</dbReference>
<dbReference type="PANTHER" id="PTHR22988">
    <property type="entry name" value="MYOTONIC DYSTROPHY S/T KINASE-RELATED"/>
    <property type="match status" value="1"/>
</dbReference>
<dbReference type="Pfam" id="PF00069">
    <property type="entry name" value="Pkinase"/>
    <property type="match status" value="1"/>
</dbReference>
<dbReference type="Pfam" id="PF00433">
    <property type="entry name" value="Pkinase_C"/>
    <property type="match status" value="1"/>
</dbReference>
<dbReference type="SMART" id="SM00220">
    <property type="entry name" value="S_TKc"/>
    <property type="match status" value="1"/>
</dbReference>
<dbReference type="SUPFAM" id="SSF56112">
    <property type="entry name" value="Protein kinase-like (PK-like)"/>
    <property type="match status" value="1"/>
</dbReference>
<dbReference type="PROSITE" id="PS51285">
    <property type="entry name" value="AGC_KINASE_CTER"/>
    <property type="match status" value="1"/>
</dbReference>
<dbReference type="PROSITE" id="PS00107">
    <property type="entry name" value="PROTEIN_KINASE_ATP"/>
    <property type="match status" value="1"/>
</dbReference>
<dbReference type="PROSITE" id="PS50011">
    <property type="entry name" value="PROTEIN_KINASE_DOM"/>
    <property type="match status" value="1"/>
</dbReference>
<dbReference type="PROSITE" id="PS00108">
    <property type="entry name" value="PROTEIN_KINASE_ST"/>
    <property type="match status" value="1"/>
</dbReference>
<comment type="function">
    <text evidence="1">Serine/threonine-protein kinase involved in controlling cell structure and proliferation of a variety of polarized outgrowths including epidermal hairs, bristles, arista laterals, and dendrites. Together with fry, maintains the integrity of epidermal hairs and is an essential component of the signaling pathway regulating dendritic branching of sensory neurons. Reduces neurite outgrowth by phosphorylating pav/pavarotti, thereby inhibiting its function in microtubule-microtubule sliding.</text>
</comment>
<comment type="catalytic activity">
    <reaction evidence="1">
        <text>L-seryl-[protein] + ATP = O-phospho-L-seryl-[protein] + ADP + H(+)</text>
        <dbReference type="Rhea" id="RHEA:17989"/>
        <dbReference type="Rhea" id="RHEA-COMP:9863"/>
        <dbReference type="Rhea" id="RHEA-COMP:11604"/>
        <dbReference type="ChEBI" id="CHEBI:15378"/>
        <dbReference type="ChEBI" id="CHEBI:29999"/>
        <dbReference type="ChEBI" id="CHEBI:30616"/>
        <dbReference type="ChEBI" id="CHEBI:83421"/>
        <dbReference type="ChEBI" id="CHEBI:456216"/>
        <dbReference type="EC" id="2.7.11.1"/>
    </reaction>
</comment>
<comment type="catalytic activity">
    <reaction evidence="1">
        <text>L-threonyl-[protein] + ATP = O-phospho-L-threonyl-[protein] + ADP + H(+)</text>
        <dbReference type="Rhea" id="RHEA:46608"/>
        <dbReference type="Rhea" id="RHEA-COMP:11060"/>
        <dbReference type="Rhea" id="RHEA-COMP:11605"/>
        <dbReference type="ChEBI" id="CHEBI:15378"/>
        <dbReference type="ChEBI" id="CHEBI:30013"/>
        <dbReference type="ChEBI" id="CHEBI:30616"/>
        <dbReference type="ChEBI" id="CHEBI:61977"/>
        <dbReference type="ChEBI" id="CHEBI:456216"/>
        <dbReference type="EC" id="2.7.11.1"/>
    </reaction>
</comment>
<comment type="cofactor">
    <cofactor evidence="1">
        <name>Mg(2+)</name>
        <dbReference type="ChEBI" id="CHEBI:18420"/>
    </cofactor>
</comment>
<comment type="subunit">
    <text evidence="1">Interacts with, and is activated by, Mob1.</text>
</comment>
<comment type="subcellular location">
    <subcellularLocation>
        <location evidence="1">Cytoplasm</location>
    </subcellularLocation>
    <subcellularLocation>
        <location evidence="1">Nucleus</location>
    </subcellularLocation>
    <text evidence="1">Trc colocalizes with Mob1 to the cell periphery in wing cells and wing hairs.</text>
</comment>
<comment type="similarity">
    <text evidence="5">Belongs to the protein kinase superfamily. AGC Ser/Thr protein kinase family.</text>
</comment>
<comment type="sequence caution" evidence="5">
    <conflict type="erroneous initiation">
        <sequence resource="EMBL-CDS" id="EAL31140"/>
    </conflict>
</comment>